<evidence type="ECO:0000255" key="1">
    <source>
        <dbReference type="HAMAP-Rule" id="MF_01517"/>
    </source>
</evidence>
<feature type="chain" id="PRO_0000292370" description="Malate dehydrogenase 2">
    <location>
        <begin position="1"/>
        <end position="329"/>
    </location>
</feature>
<feature type="active site" description="Proton acceptor" evidence="1">
    <location>
        <position position="188"/>
    </location>
</feature>
<feature type="binding site" evidence="1">
    <location>
        <begin position="12"/>
        <end position="18"/>
    </location>
    <ligand>
        <name>NAD(+)</name>
        <dbReference type="ChEBI" id="CHEBI:57540"/>
    </ligand>
</feature>
<feature type="binding site" evidence="1">
    <location>
        <position position="93"/>
    </location>
    <ligand>
        <name>substrate</name>
    </ligand>
</feature>
<feature type="binding site" evidence="1">
    <location>
        <position position="99"/>
    </location>
    <ligand>
        <name>substrate</name>
    </ligand>
</feature>
<feature type="binding site" evidence="1">
    <location>
        <position position="106"/>
    </location>
    <ligand>
        <name>NAD(+)</name>
        <dbReference type="ChEBI" id="CHEBI:57540"/>
    </ligand>
</feature>
<feature type="binding site" evidence="1">
    <location>
        <position position="113"/>
    </location>
    <ligand>
        <name>NAD(+)</name>
        <dbReference type="ChEBI" id="CHEBI:57540"/>
    </ligand>
</feature>
<feature type="binding site" evidence="1">
    <location>
        <begin position="130"/>
        <end position="132"/>
    </location>
    <ligand>
        <name>NAD(+)</name>
        <dbReference type="ChEBI" id="CHEBI:57540"/>
    </ligand>
</feature>
<feature type="binding site" evidence="1">
    <location>
        <position position="132"/>
    </location>
    <ligand>
        <name>substrate</name>
    </ligand>
</feature>
<feature type="binding site" evidence="1">
    <location>
        <position position="163"/>
    </location>
    <ligand>
        <name>substrate</name>
    </ligand>
</feature>
<organism>
    <name type="scientific">Burkholderia thailandensis (strain ATCC 700388 / DSM 13276 / CCUG 48851 / CIP 106301 / E264)</name>
    <dbReference type="NCBI Taxonomy" id="271848"/>
    <lineage>
        <taxon>Bacteria</taxon>
        <taxon>Pseudomonadati</taxon>
        <taxon>Pseudomonadota</taxon>
        <taxon>Betaproteobacteria</taxon>
        <taxon>Burkholderiales</taxon>
        <taxon>Burkholderiaceae</taxon>
        <taxon>Burkholderia</taxon>
        <taxon>pseudomallei group</taxon>
    </lineage>
</organism>
<comment type="function">
    <text evidence="1">Catalyzes the reversible oxidation of malate to oxaloacetate.</text>
</comment>
<comment type="catalytic activity">
    <reaction evidence="1">
        <text>(S)-malate + NAD(+) = oxaloacetate + NADH + H(+)</text>
        <dbReference type="Rhea" id="RHEA:21432"/>
        <dbReference type="ChEBI" id="CHEBI:15378"/>
        <dbReference type="ChEBI" id="CHEBI:15589"/>
        <dbReference type="ChEBI" id="CHEBI:16452"/>
        <dbReference type="ChEBI" id="CHEBI:57540"/>
        <dbReference type="ChEBI" id="CHEBI:57945"/>
        <dbReference type="EC" id="1.1.1.37"/>
    </reaction>
</comment>
<comment type="similarity">
    <text evidence="1">Belongs to the LDH/MDH superfamily. MDH type 2 family.</text>
</comment>
<protein>
    <recommendedName>
        <fullName evidence="1">Malate dehydrogenase 2</fullName>
        <ecNumber evidence="1">1.1.1.37</ecNumber>
    </recommendedName>
</protein>
<keyword id="KW-0520">NAD</keyword>
<keyword id="KW-0560">Oxidoreductase</keyword>
<keyword id="KW-0816">Tricarboxylic acid cycle</keyword>
<proteinExistence type="inferred from homology"/>
<gene>
    <name evidence="1" type="primary">mdh2</name>
    <name type="ordered locus">BTH_II1617</name>
</gene>
<dbReference type="EC" id="1.1.1.37" evidence="1"/>
<dbReference type="EMBL" id="CP000085">
    <property type="protein sequence ID" value="ABC35074.1"/>
    <property type="molecule type" value="Genomic_DNA"/>
</dbReference>
<dbReference type="RefSeq" id="WP_009897532.1">
    <property type="nucleotide sequence ID" value="NZ_CP008786.1"/>
</dbReference>
<dbReference type="SMR" id="Q2T4T8"/>
<dbReference type="GeneID" id="45119057"/>
<dbReference type="KEGG" id="bte:BTH_II1617"/>
<dbReference type="HOGENOM" id="CLU_040727_2_0_4"/>
<dbReference type="Proteomes" id="UP000001930">
    <property type="component" value="Chromosome II"/>
</dbReference>
<dbReference type="GO" id="GO:0030060">
    <property type="term" value="F:L-malate dehydrogenase (NAD+) activity"/>
    <property type="evidence" value="ECO:0007669"/>
    <property type="project" value="UniProtKB-UniRule"/>
</dbReference>
<dbReference type="GO" id="GO:0006108">
    <property type="term" value="P:malate metabolic process"/>
    <property type="evidence" value="ECO:0007669"/>
    <property type="project" value="InterPro"/>
</dbReference>
<dbReference type="GO" id="GO:0006099">
    <property type="term" value="P:tricarboxylic acid cycle"/>
    <property type="evidence" value="ECO:0007669"/>
    <property type="project" value="UniProtKB-UniRule"/>
</dbReference>
<dbReference type="CDD" id="cd01338">
    <property type="entry name" value="MDH_chloroplast-like"/>
    <property type="match status" value="1"/>
</dbReference>
<dbReference type="FunFam" id="3.40.50.720:FF:000010">
    <property type="entry name" value="Malate dehydrogenase"/>
    <property type="match status" value="1"/>
</dbReference>
<dbReference type="FunFam" id="3.90.110.10:FF:000002">
    <property type="entry name" value="Malate dehydrogenase"/>
    <property type="match status" value="1"/>
</dbReference>
<dbReference type="Gene3D" id="3.90.110.10">
    <property type="entry name" value="Lactate dehydrogenase/glycoside hydrolase, family 4, C-terminal"/>
    <property type="match status" value="1"/>
</dbReference>
<dbReference type="Gene3D" id="3.40.50.720">
    <property type="entry name" value="NAD(P)-binding Rossmann-like Domain"/>
    <property type="match status" value="1"/>
</dbReference>
<dbReference type="HAMAP" id="MF_01517">
    <property type="entry name" value="Malate_dehydrog_2"/>
    <property type="match status" value="1"/>
</dbReference>
<dbReference type="InterPro" id="IPR001557">
    <property type="entry name" value="L-lactate/malate_DH"/>
</dbReference>
<dbReference type="InterPro" id="IPR022383">
    <property type="entry name" value="Lactate/malate_DH_C"/>
</dbReference>
<dbReference type="InterPro" id="IPR001236">
    <property type="entry name" value="Lactate/malate_DH_N"/>
</dbReference>
<dbReference type="InterPro" id="IPR015955">
    <property type="entry name" value="Lactate_DH/Glyco_Ohase_4_C"/>
</dbReference>
<dbReference type="InterPro" id="IPR010945">
    <property type="entry name" value="Malate_DH_type2"/>
</dbReference>
<dbReference type="InterPro" id="IPR036291">
    <property type="entry name" value="NAD(P)-bd_dom_sf"/>
</dbReference>
<dbReference type="NCBIfam" id="TIGR01759">
    <property type="entry name" value="MalateDH-SF1"/>
    <property type="match status" value="1"/>
</dbReference>
<dbReference type="NCBIfam" id="NF003916">
    <property type="entry name" value="PRK05442.1"/>
    <property type="match status" value="1"/>
</dbReference>
<dbReference type="PANTHER" id="PTHR23382">
    <property type="entry name" value="MALATE DEHYDROGENASE"/>
    <property type="match status" value="1"/>
</dbReference>
<dbReference type="Pfam" id="PF02866">
    <property type="entry name" value="Ldh_1_C"/>
    <property type="match status" value="1"/>
</dbReference>
<dbReference type="Pfam" id="PF00056">
    <property type="entry name" value="Ldh_1_N"/>
    <property type="match status" value="1"/>
</dbReference>
<dbReference type="PIRSF" id="PIRSF000102">
    <property type="entry name" value="Lac_mal_DH"/>
    <property type="match status" value="1"/>
</dbReference>
<dbReference type="SUPFAM" id="SSF56327">
    <property type="entry name" value="LDH C-terminal domain-like"/>
    <property type="match status" value="1"/>
</dbReference>
<dbReference type="SUPFAM" id="SSF51735">
    <property type="entry name" value="NAD(P)-binding Rossmann-fold domains"/>
    <property type="match status" value="1"/>
</dbReference>
<name>MDH2_BURTA</name>
<reference key="1">
    <citation type="journal article" date="2005" name="BMC Genomics">
        <title>Bacterial genome adaptation to niches: divergence of the potential virulence genes in three Burkholderia species of different survival strategies.</title>
        <authorList>
            <person name="Kim H.S."/>
            <person name="Schell M.A."/>
            <person name="Yu Y."/>
            <person name="Ulrich R.L."/>
            <person name="Sarria S.H."/>
            <person name="Nierman W.C."/>
            <person name="DeShazer D."/>
        </authorList>
    </citation>
    <scope>NUCLEOTIDE SEQUENCE [LARGE SCALE GENOMIC DNA]</scope>
    <source>
        <strain>ATCC 700388 / DSM 13276 / CCUG 48851 / CIP 106301 / E264</strain>
    </source>
</reference>
<sequence length="329" mass="36101">MNTEAKRIAVSGAAGQIAYSLLFRIAQGDLLGEDQPVILQLLDLPQAYGAVQGVVMELQDCAFPLLKEIQVATDPHAAFLNADYAFLVGSKPRTKGMERRDLLAENAAIFRTQGRALNEAASRDVKVLVVGNPANTNASILRRFAPDLPDDAISAMIRLDHNRAVSMLAQRCNVDVDSIADMVVWGNHSPTMFPDYRHARIGRRLVKDLINDENWYRESFIPKVAQRGTAIIEARGASSAASAANAAIDQMRDWIFGSDGRWVSMSVPSDGSYGIAPGLMFGVPVICDGGRYERVKDIGIDAFARQRIDLSVRELQEEADVVNRLFADR</sequence>
<accession>Q2T4T8</accession>